<name>ASPGP_PYRHO</name>
<reference key="1">
    <citation type="journal article" date="1998" name="DNA Res.">
        <title>Complete sequence and gene organization of the genome of a hyper-thermophilic archaebacterium, Pyrococcus horikoshii OT3.</title>
        <authorList>
            <person name="Kawarabayasi Y."/>
            <person name="Sawada M."/>
            <person name="Horikawa H."/>
            <person name="Haikawa Y."/>
            <person name="Hino Y."/>
            <person name="Yamamoto S."/>
            <person name="Sekine M."/>
            <person name="Baba S."/>
            <person name="Kosugi H."/>
            <person name="Hosoyama A."/>
            <person name="Nagai Y."/>
            <person name="Sakai M."/>
            <person name="Ogura K."/>
            <person name="Otsuka R."/>
            <person name="Nakazawa H."/>
            <person name="Takamiya M."/>
            <person name="Ohfuku Y."/>
            <person name="Funahashi T."/>
            <person name="Tanaka T."/>
            <person name="Kudoh Y."/>
            <person name="Yamazaki J."/>
            <person name="Kushida N."/>
            <person name="Oguchi A."/>
            <person name="Aoki K."/>
            <person name="Yoshizawa T."/>
            <person name="Nakamura Y."/>
            <person name="Robb F.T."/>
            <person name="Horikoshi K."/>
            <person name="Masuchi Y."/>
            <person name="Shizuya H."/>
            <person name="Kikuchi H."/>
        </authorList>
    </citation>
    <scope>NUCLEOTIDE SEQUENCE [LARGE SCALE GENOMIC DNA]</scope>
    <source>
        <strain>ATCC 700860 / DSM 12428 / JCM 9974 / NBRC 100139 / OT-3</strain>
    </source>
</reference>
<gene>
    <name type="ordered locus">PH0232</name>
</gene>
<accession>O57971</accession>
<dbReference type="EC" id="3.5.1.1" evidence="2"/>
<dbReference type="EMBL" id="BA000001">
    <property type="protein sequence ID" value="BAA29304.1"/>
    <property type="molecule type" value="Genomic_DNA"/>
</dbReference>
<dbReference type="PIR" id="A71247">
    <property type="entry name" value="A71247"/>
</dbReference>
<dbReference type="RefSeq" id="WP_010884335.1">
    <property type="nucleotide sequence ID" value="NC_000961.1"/>
</dbReference>
<dbReference type="SMR" id="O57971"/>
<dbReference type="STRING" id="70601.gene:9377148"/>
<dbReference type="MEROPS" id="T02.002"/>
<dbReference type="EnsemblBacteria" id="BAA29304">
    <property type="protein sequence ID" value="BAA29304"/>
    <property type="gene ID" value="BAA29304"/>
</dbReference>
<dbReference type="GeneID" id="1444122"/>
<dbReference type="KEGG" id="pho:PH0232"/>
<dbReference type="eggNOG" id="arCOG04779">
    <property type="taxonomic scope" value="Archaea"/>
</dbReference>
<dbReference type="OrthoDB" id="18230at2157"/>
<dbReference type="Proteomes" id="UP000000752">
    <property type="component" value="Chromosome"/>
</dbReference>
<dbReference type="GO" id="GO:0005737">
    <property type="term" value="C:cytoplasm"/>
    <property type="evidence" value="ECO:0007669"/>
    <property type="project" value="TreeGrafter"/>
</dbReference>
<dbReference type="GO" id="GO:0004067">
    <property type="term" value="F:asparaginase activity"/>
    <property type="evidence" value="ECO:0007669"/>
    <property type="project" value="UniProtKB-EC"/>
</dbReference>
<dbReference type="GO" id="GO:0008233">
    <property type="term" value="F:peptidase activity"/>
    <property type="evidence" value="ECO:0007669"/>
    <property type="project" value="UniProtKB-KW"/>
</dbReference>
<dbReference type="GO" id="GO:0006508">
    <property type="term" value="P:proteolysis"/>
    <property type="evidence" value="ECO:0007669"/>
    <property type="project" value="UniProtKB-KW"/>
</dbReference>
<dbReference type="CDD" id="cd04512">
    <property type="entry name" value="Ntn_Asparaginase_2_like"/>
    <property type="match status" value="1"/>
</dbReference>
<dbReference type="FunFam" id="3.60.20.30:FF:000001">
    <property type="entry name" value="Isoaspartyl peptidase/L-asparaginase"/>
    <property type="match status" value="1"/>
</dbReference>
<dbReference type="Gene3D" id="3.60.20.30">
    <property type="entry name" value="(Glycosyl)asparaginase"/>
    <property type="match status" value="1"/>
</dbReference>
<dbReference type="InterPro" id="IPR029055">
    <property type="entry name" value="Ntn_hydrolases_N"/>
</dbReference>
<dbReference type="InterPro" id="IPR000246">
    <property type="entry name" value="Peptidase_T2"/>
</dbReference>
<dbReference type="PANTHER" id="PTHR10188">
    <property type="entry name" value="L-ASPARAGINASE"/>
    <property type="match status" value="1"/>
</dbReference>
<dbReference type="PANTHER" id="PTHR10188:SF6">
    <property type="entry name" value="N(4)-(BETA-N-ACETYLGLUCOSAMINYL)-L-ASPARAGINASE"/>
    <property type="match status" value="1"/>
</dbReference>
<dbReference type="Pfam" id="PF01112">
    <property type="entry name" value="Asparaginase_2"/>
    <property type="match status" value="1"/>
</dbReference>
<dbReference type="SUPFAM" id="SSF56235">
    <property type="entry name" value="N-terminal nucleophile aminohydrolases (Ntn hydrolases)"/>
    <property type="match status" value="1"/>
</dbReference>
<proteinExistence type="inferred from homology"/>
<feature type="chain" id="PRO_0000184581" description="L-asparaginase subunit alpha">
    <location>
        <begin position="1"/>
        <end position="174"/>
    </location>
</feature>
<feature type="chain" id="PRO_0000329018" description="L-asparaginase subunit beta">
    <location>
        <begin position="175"/>
        <end position="305"/>
    </location>
</feature>
<feature type="active site" description="Nucleophile" evidence="1">
    <location>
        <position position="175"/>
    </location>
</feature>
<feature type="binding site" evidence="1">
    <location>
        <begin position="202"/>
        <end position="205"/>
    </location>
    <ligand>
        <name>substrate</name>
    </ligand>
</feature>
<feature type="binding site" evidence="1">
    <location>
        <begin position="224"/>
        <end position="227"/>
    </location>
    <ligand>
        <name>substrate</name>
    </ligand>
</feature>
<feature type="site" description="Cleavage; by autolysis" evidence="1">
    <location>
        <begin position="174"/>
        <end position="175"/>
    </location>
</feature>
<evidence type="ECO:0000250" key="1">
    <source>
        <dbReference type="UniProtKB" id="P37595"/>
    </source>
</evidence>
<evidence type="ECO:0000250" key="2">
    <source>
        <dbReference type="UniProtKB" id="Q5JHT1"/>
    </source>
</evidence>
<evidence type="ECO:0000305" key="3"/>
<comment type="function">
    <text evidence="2">Catalyzes the hydrolysis of L-asparagine into L-aspartate and ammonia.</text>
</comment>
<comment type="catalytic activity">
    <reaction evidence="2">
        <text>L-asparagine + H2O = L-aspartate + NH4(+)</text>
        <dbReference type="Rhea" id="RHEA:21016"/>
        <dbReference type="ChEBI" id="CHEBI:15377"/>
        <dbReference type="ChEBI" id="CHEBI:28938"/>
        <dbReference type="ChEBI" id="CHEBI:29991"/>
        <dbReference type="ChEBI" id="CHEBI:58048"/>
        <dbReference type="EC" id="3.5.1.1"/>
    </reaction>
</comment>
<comment type="subunit">
    <text evidence="1">Heterotetramer of two alpha and two beta chains arranged as a dimer of alpha/beta heterodimers.</text>
</comment>
<comment type="PTM">
    <text evidence="2">Autocleaved (By similarity). Generates the alpha and beta subunits (By similarity). The N-terminal residue of the beta subunit is thought to be responsible for the nucleophile hydrolase activity (By similarity).</text>
</comment>
<comment type="similarity">
    <text evidence="3">Belongs to the Ntn-hydrolase family.</text>
</comment>
<sequence length="305" mass="32543">MVAIIVHGGAGTIKKEERIPKVIEGVKEAVIVGWKELRKGSALDAVEEAIKVLEDNPIFNAGTGSVLTIDGKVEMDAAIMRGKTLEAGAVAGIWGVKNPISVARKVMEKTDHVLLVGEGAVKFARLMGFPEYNPITEERIEQWKELKEKLMKGEIKYWKKLGELIKEYPEVLRSTVGAVAFDGEEIVAGTSTGGVFLKMFGRVGDTPIIGAGTYANEVAGASCTGLGEVAIRLALAKTATDFVRLGMDAQAASNAAISLATKYFGKDTMGIIMVDAAGNVGFAKNTKHMSYAYMKDGMEEPEAGV</sequence>
<keyword id="KW-0068">Autocatalytic cleavage</keyword>
<keyword id="KW-0378">Hydrolase</keyword>
<keyword id="KW-0645">Protease</keyword>
<organism>
    <name type="scientific">Pyrococcus horikoshii (strain ATCC 700860 / DSM 12428 / JCM 9974 / NBRC 100139 / OT-3)</name>
    <dbReference type="NCBI Taxonomy" id="70601"/>
    <lineage>
        <taxon>Archaea</taxon>
        <taxon>Methanobacteriati</taxon>
        <taxon>Methanobacteriota</taxon>
        <taxon>Thermococci</taxon>
        <taxon>Thermococcales</taxon>
        <taxon>Thermococcaceae</taxon>
        <taxon>Pyrococcus</taxon>
    </lineage>
</organism>
<protein>
    <recommendedName>
        <fullName evidence="2">Plant-type L-asparaginase</fullName>
        <ecNumber evidence="2">3.5.1.1</ecNumber>
    </recommendedName>
    <alternativeName>
        <fullName evidence="2">L-asparagine amidohydrolase</fullName>
    </alternativeName>
    <component>
        <recommendedName>
            <fullName>L-asparaginase subunit alpha</fullName>
        </recommendedName>
    </component>
    <component>
        <recommendedName>
            <fullName>L-asparaginase subunit beta</fullName>
        </recommendedName>
    </component>
</protein>